<sequence length="973" mass="111047">MEVIEKLETIRETLNDTKDKKDFQKIHDELVQYLDGIDPLTIDDDKWNEILKLFKIIIVKLKNSTIKTTSLENELTQHEKKRTVKEVEKVEEDMKVDVANDNSKPTLMDKVLQVSSQPNNPYSADVLQIRTILSKTLFVDTDSEAYSLYVPESQKLDVSPITIELTTIEKYQPKVNILKQAVIVPSQNPLLADTYGAPEILFSTDFFDDITSNSSEGLQLYFFDKAYKLKKELPNLPFLSSLDKDVNPLNPLNSVCKSFGQEKYYDMVMDRTDRGLDARRAAMQFDNVIVDAQNRTVQFNVRMHPFDLQLLRISQQFAEPMQDLAPVVREYMMLGADGYVLTQKTRLDRDQQLIANRRSVVFDRMCELSGPLYRSRIVHSMRMMSKLWRTNVFRTSLEDEITKIYAAAEVSMVSIDATTSALSTINIASAEQTLNALLNMSFFRCELDLIGSQSSFGAAMSAMIALMILPTDQENMDDEVFDVLCNLVYNELIAWAADRPVFVRRAGATNAFRQFVNAGLNRDITNYMRFVLLRRPWLPLYNSRDVRRNAHVLVPNVDLANINDQVYVAINSFLNGIIEASRRNPNPNKTISANSFRKLMKNMRDICVNRLMPVIRLIRYNVERIGMILHMLPYSADIFDINRNLRDERLRIKIPMSGFLSLVMGITKAPDAFDWSQVLNFADDVRKMDYAEAISIEDSASVAIMRNDANRATSKKEIFISEVKPPTPTVASIQKIPSATLTAMFSDRQLINLIRDTHSFRVIREIAVALQAAFDNSPTSQHGVGKGAVLHPVPQNFGRSSQFVRRDNILLQRPAGIQQFTIEDLKQGRYFQGLMAQIRARQPIIVNGPIPLRISDAAEIEQVTLAFLTMNSPYDAYIDPRDLKQQKLLTDREVDLFIDQNPARPNDEFDNVMARTSVFIIDAPRAIVPINPQRLNFPYHDIMVTDSVTKFIEFTVALTPDLQLFNGLLVFEQ</sequence>
<feature type="chain" id="PRO_0000369835" description="Inner capsid protein VP2">
    <location>
        <begin position="1"/>
        <end position="973"/>
    </location>
</feature>
<proteinExistence type="inferred from homology"/>
<accession>Q45UF9</accession>
<dbReference type="EMBL" id="DQ113898">
    <property type="protein sequence ID" value="AAZ03486.1"/>
    <property type="molecule type" value="Genomic_RNA"/>
</dbReference>
<dbReference type="RefSeq" id="YP_392491.1">
    <property type="nucleotide sequence ID" value="NC_007549.1"/>
</dbReference>
<dbReference type="SMR" id="Q45UF9"/>
<dbReference type="GeneID" id="5076651"/>
<dbReference type="KEGG" id="vg:5076651"/>
<dbReference type="OrthoDB" id="2586at10239"/>
<dbReference type="Proteomes" id="UP000007663">
    <property type="component" value="Genome"/>
</dbReference>
<dbReference type="GO" id="GO:0039616">
    <property type="term" value="C:T=2 icosahedral viral capsid"/>
    <property type="evidence" value="ECO:0007669"/>
    <property type="project" value="UniProtKB-UniRule"/>
</dbReference>
<dbReference type="GO" id="GO:0039625">
    <property type="term" value="C:viral inner capsid"/>
    <property type="evidence" value="ECO:0007669"/>
    <property type="project" value="UniProtKB-UniRule"/>
</dbReference>
<dbReference type="GO" id="GO:0019013">
    <property type="term" value="C:viral nucleocapsid"/>
    <property type="evidence" value="ECO:0007669"/>
    <property type="project" value="UniProtKB-UniRule"/>
</dbReference>
<dbReference type="GO" id="GO:0003723">
    <property type="term" value="F:RNA binding"/>
    <property type="evidence" value="ECO:0007669"/>
    <property type="project" value="UniProtKB-UniRule"/>
</dbReference>
<dbReference type="HAMAP" id="MF_04123">
    <property type="entry name" value="Rota_VP2"/>
    <property type="match status" value="1"/>
</dbReference>
<dbReference type="InterPro" id="IPR007779">
    <property type="entry name" value="Rotavirus_VP2"/>
</dbReference>
<evidence type="ECO:0000255" key="1">
    <source>
        <dbReference type="HAMAP-Rule" id="MF_04123"/>
    </source>
</evidence>
<keyword id="KW-0167">Capsid protein</keyword>
<keyword id="KW-1153">Inner capsid protein</keyword>
<keyword id="KW-1185">Reference proteome</keyword>
<keyword id="KW-0694">RNA-binding</keyword>
<keyword id="KW-1141">T=2 icosahedral capsid protein</keyword>
<keyword id="KW-0946">Virion</keyword>
<comment type="function">
    <text evidence="1">Inner capsid protein that self-assembles to form an icosahedral capsid with a T=2 symmetry, which consists of 120 copies of VP2, with channels at each of its five-fold vertices. This capsid constitutes the innermost concentric layer of the viral mature particle. It encapsidates the polymerase VP1, the capping enzyme VP3 and the genomic dsRNA, thereby defining the core. The innermost VP2 capsid and the intermediate VP6 capsid remain intact following cell entry to protect the dsRNA from degradation and to prevent unfavorable antiviral responses in the host cell during all the replication cycle of the virus. Nascent transcripts are transcribed within the structural confines of this double-layered particle (DLP) and are extruded through the channels formed by VP2 N-termini. VP2 is required for the replicase activity of VP1 polymerase. Probably recruits a copy of a VP1-VP3 complex, potentially along with a segment of plus-strand RNA, as a decamer of VP2 assembles. May activate the autoinhibited VP1/RNA complex to coordinate packaging and genome replication.</text>
</comment>
<comment type="subunit">
    <text evidence="1">Homodecamer; each decamer is made up of two conformers of VP2, called VP2A and VP2B. Interacts with a VP1-VP3 complex. Interacts with the intermediate capsid protein VP6. Interacts with NSP5. Interacts (via N-terminus) with NSP2.</text>
</comment>
<comment type="subcellular location">
    <subcellularLocation>
        <location evidence="1">Virion</location>
    </subcellularLocation>
    <text evidence="1">Inner capsid protein. Also found in spherical cytoplasmic structures, called virus factories, that appear early after infection and are the site of viral replication and packaging.</text>
</comment>
<comment type="similarity">
    <text evidence="1">Belongs to the rotavirus VP2 family.</text>
</comment>
<name>VP2_ROTJ1</name>
<organismHost>
    <name type="scientific">Homo sapiens</name>
    <name type="common">Human</name>
    <dbReference type="NCBI Taxonomy" id="9606"/>
</organismHost>
<reference key="1">
    <citation type="journal article" date="2008" name="J. Gen. Virol.">
        <title>Molecular characterization of a novel adult diarrhoea rotavirus strain J19 isolated in China and its significance for the evolution and origin of group B rotaviruses.</title>
        <authorList>
            <person name="Jiang S."/>
            <person name="Ji S."/>
            <person name="Tang Q."/>
            <person name="Cui X."/>
            <person name="Yang H."/>
            <person name="Kan B."/>
            <person name="Gao S."/>
        </authorList>
    </citation>
    <scope>NUCLEOTIDE SEQUENCE [GENOMIC RNA]</scope>
</reference>
<organism>
    <name type="scientific">Rotavirus X (strain RVX/Human/China/NADRV-J19/1997/GXP[X])</name>
    <name type="common">RV ADRV-N</name>
    <name type="synonym">Rotavirus (isolate novel adult diarrhea rotavirus-J19)</name>
    <dbReference type="NCBI Taxonomy" id="335103"/>
    <lineage>
        <taxon>Viruses</taxon>
        <taxon>Riboviria</taxon>
        <taxon>Orthornavirae</taxon>
        <taxon>Duplornaviricota</taxon>
        <taxon>Resentoviricetes</taxon>
        <taxon>Reovirales</taxon>
        <taxon>Sedoreoviridae</taxon>
        <taxon>Rotavirus</taxon>
        <taxon>Rotavirus H</taxon>
    </lineage>
</organism>
<protein>
    <recommendedName>
        <fullName evidence="1">Inner capsid protein VP2</fullName>
    </recommendedName>
</protein>